<accession>P87128</accession>
<reference key="1">
    <citation type="journal article" date="2002" name="Nature">
        <title>The genome sequence of Schizosaccharomyces pombe.</title>
        <authorList>
            <person name="Wood V."/>
            <person name="Gwilliam R."/>
            <person name="Rajandream M.A."/>
            <person name="Lyne M.H."/>
            <person name="Lyne R."/>
            <person name="Stewart A."/>
            <person name="Sgouros J.G."/>
            <person name="Peat N."/>
            <person name="Hayles J."/>
            <person name="Baker S.G."/>
            <person name="Basham D."/>
            <person name="Bowman S."/>
            <person name="Brooks K."/>
            <person name="Brown D."/>
            <person name="Brown S."/>
            <person name="Chillingworth T."/>
            <person name="Churcher C.M."/>
            <person name="Collins M."/>
            <person name="Connor R."/>
            <person name="Cronin A."/>
            <person name="Davis P."/>
            <person name="Feltwell T."/>
            <person name="Fraser A."/>
            <person name="Gentles S."/>
            <person name="Goble A."/>
            <person name="Hamlin N."/>
            <person name="Harris D.E."/>
            <person name="Hidalgo J."/>
            <person name="Hodgson G."/>
            <person name="Holroyd S."/>
            <person name="Hornsby T."/>
            <person name="Howarth S."/>
            <person name="Huckle E.J."/>
            <person name="Hunt S."/>
            <person name="Jagels K."/>
            <person name="James K.D."/>
            <person name="Jones L."/>
            <person name="Jones M."/>
            <person name="Leather S."/>
            <person name="McDonald S."/>
            <person name="McLean J."/>
            <person name="Mooney P."/>
            <person name="Moule S."/>
            <person name="Mungall K.L."/>
            <person name="Murphy L.D."/>
            <person name="Niblett D."/>
            <person name="Odell C."/>
            <person name="Oliver K."/>
            <person name="O'Neil S."/>
            <person name="Pearson D."/>
            <person name="Quail M.A."/>
            <person name="Rabbinowitsch E."/>
            <person name="Rutherford K.M."/>
            <person name="Rutter S."/>
            <person name="Saunders D."/>
            <person name="Seeger K."/>
            <person name="Sharp S."/>
            <person name="Skelton J."/>
            <person name="Simmonds M.N."/>
            <person name="Squares R."/>
            <person name="Squares S."/>
            <person name="Stevens K."/>
            <person name="Taylor K."/>
            <person name="Taylor R.G."/>
            <person name="Tivey A."/>
            <person name="Walsh S.V."/>
            <person name="Warren T."/>
            <person name="Whitehead S."/>
            <person name="Woodward J.R."/>
            <person name="Volckaert G."/>
            <person name="Aert R."/>
            <person name="Robben J."/>
            <person name="Grymonprez B."/>
            <person name="Weltjens I."/>
            <person name="Vanstreels E."/>
            <person name="Rieger M."/>
            <person name="Schaefer M."/>
            <person name="Mueller-Auer S."/>
            <person name="Gabel C."/>
            <person name="Fuchs M."/>
            <person name="Duesterhoeft A."/>
            <person name="Fritzc C."/>
            <person name="Holzer E."/>
            <person name="Moestl D."/>
            <person name="Hilbert H."/>
            <person name="Borzym K."/>
            <person name="Langer I."/>
            <person name="Beck A."/>
            <person name="Lehrach H."/>
            <person name="Reinhardt R."/>
            <person name="Pohl T.M."/>
            <person name="Eger P."/>
            <person name="Zimmermann W."/>
            <person name="Wedler H."/>
            <person name="Wambutt R."/>
            <person name="Purnelle B."/>
            <person name="Goffeau A."/>
            <person name="Cadieu E."/>
            <person name="Dreano S."/>
            <person name="Gloux S."/>
            <person name="Lelaure V."/>
            <person name="Mottier S."/>
            <person name="Galibert F."/>
            <person name="Aves S.J."/>
            <person name="Xiang Z."/>
            <person name="Hunt C."/>
            <person name="Moore K."/>
            <person name="Hurst S.M."/>
            <person name="Lucas M."/>
            <person name="Rochet M."/>
            <person name="Gaillardin C."/>
            <person name="Tallada V.A."/>
            <person name="Garzon A."/>
            <person name="Thode G."/>
            <person name="Daga R.R."/>
            <person name="Cruzado L."/>
            <person name="Jimenez J."/>
            <person name="Sanchez M."/>
            <person name="del Rey F."/>
            <person name="Benito J."/>
            <person name="Dominguez A."/>
            <person name="Revuelta J.L."/>
            <person name="Moreno S."/>
            <person name="Armstrong J."/>
            <person name="Forsburg S.L."/>
            <person name="Cerutti L."/>
            <person name="Lowe T."/>
            <person name="McCombie W.R."/>
            <person name="Paulsen I."/>
            <person name="Potashkin J."/>
            <person name="Shpakovski G.V."/>
            <person name="Ussery D."/>
            <person name="Barrell B.G."/>
            <person name="Nurse P."/>
        </authorList>
    </citation>
    <scope>NUCLEOTIDE SEQUENCE [LARGE SCALE GENOMIC DNA]</scope>
    <source>
        <strain>972 / ATCC 24843</strain>
    </source>
</reference>
<reference key="2">
    <citation type="journal article" date="2004" name="Mol. Genet. Genomics">
        <title>Two-hybrid search for proteins that interact with Sad1 and Kms1, two membrane-bound components of the spindle pole body in fission yeast.</title>
        <authorList>
            <person name="Miki F."/>
            <person name="Kurabayashi A."/>
            <person name="Tange Y."/>
            <person name="Okazaki K."/>
            <person name="Shimanuki M."/>
            <person name="Niwa O."/>
        </authorList>
    </citation>
    <scope>INTERACTION WITH SAD1</scope>
</reference>
<organism>
    <name type="scientific">Schizosaccharomyces pombe (strain 972 / ATCC 24843)</name>
    <name type="common">Fission yeast</name>
    <dbReference type="NCBI Taxonomy" id="284812"/>
    <lineage>
        <taxon>Eukaryota</taxon>
        <taxon>Fungi</taxon>
        <taxon>Dikarya</taxon>
        <taxon>Ascomycota</taxon>
        <taxon>Taphrinomycotina</taxon>
        <taxon>Schizosaccharomycetes</taxon>
        <taxon>Schizosaccharomycetales</taxon>
        <taxon>Schizosaccharomycetaceae</taxon>
        <taxon>Schizosaccharomyces</taxon>
    </lineage>
</organism>
<gene>
    <name type="ORF">SPAC3A12.13c</name>
</gene>
<feature type="chain" id="PRO_0000116638" description="Probable eukaryotic translation initiation factor 3 subunit J">
    <location>
        <begin position="1"/>
        <end position="274"/>
    </location>
</feature>
<feature type="region of interest" description="Disordered" evidence="2">
    <location>
        <begin position="1"/>
        <end position="110"/>
    </location>
</feature>
<feature type="region of interest" description="Disordered" evidence="2">
    <location>
        <begin position="207"/>
        <end position="245"/>
    </location>
</feature>
<feature type="compositionally biased region" description="Acidic residues" evidence="2">
    <location>
        <begin position="38"/>
        <end position="47"/>
    </location>
</feature>
<feature type="compositionally biased region" description="Low complexity" evidence="2">
    <location>
        <begin position="52"/>
        <end position="73"/>
    </location>
</feature>
<feature type="compositionally biased region" description="Basic and acidic residues" evidence="2">
    <location>
        <begin position="82"/>
        <end position="110"/>
    </location>
</feature>
<feature type="compositionally biased region" description="Low complexity" evidence="2">
    <location>
        <begin position="219"/>
        <end position="234"/>
    </location>
</feature>
<sequence>MDSWEDFLVEDPAKPAEFDFPLGKDSQSSSKPKKRFDDEEDEDEEENKESLQNDSHSVSQKSSSSSQNDQGSNKMTRIQQKIQERNFEKAIKASEAAAKEESLESSKEAMRQAEIDSDLANAMDLFDIVDKNSASANRSKQADQRQLKTKADYAAFQADILKKVKNCQTTAEYNNFVQDLIPLLLTGLNATNLKAVQKSVNKLVVNKEQQEKTQSKRGAAAPAAKPVSTAAPSKKGGKPTVNVNSKKTVADKSAYEDYIEDEYDDYADDFDDFM</sequence>
<comment type="function">
    <text evidence="1">Component of the eukaryotic translation initiation factor 3 (eIF-3) complex, which is involved in protein synthesis of a specialized repertoire of mRNAs and, together with other initiation factors, stimulates binding of mRNA and methionyl-tRNAi to the 40S ribosome. The eIF-3 complex specifically targets and initiates translation of a subset of mRNAs involved in cell proliferation.</text>
</comment>
<comment type="subunit">
    <text evidence="1 3">Component of the eukaryotic translation initiation factor 3 (eIF-3) complex. The eIF-3 complex appears to include tif32/eif3a, SPAC25G10.08/eif3b, tif33/eif3c, SPBC4C3.07/eif3f, tif35/eif3g and sum1/eif3i. This set of common subunits may also associate exclusively with either moe1/eif3d and int6/eif3e, or with SPAC821.05/eif3h and SPAC1751.03/eif3m. The eIF-3 complex may also include SPAC3A12.13c/eif3j (By similarity). Interacts with sad1 (PubMed:14655046).</text>
</comment>
<comment type="subcellular location">
    <subcellularLocation>
        <location evidence="1">Cytoplasm</location>
    </subcellularLocation>
</comment>
<comment type="similarity">
    <text evidence="1">Belongs to the eIF-3 subunit J family.</text>
</comment>
<proteinExistence type="evidence at protein level"/>
<dbReference type="EMBL" id="CU329670">
    <property type="protein sequence ID" value="CAB08741.1"/>
    <property type="molecule type" value="Genomic_DNA"/>
</dbReference>
<dbReference type="PIR" id="T38681">
    <property type="entry name" value="T38681"/>
</dbReference>
<dbReference type="BioGRID" id="279540">
    <property type="interactions" value="45"/>
</dbReference>
<dbReference type="FunCoup" id="P87128">
    <property type="interactions" value="66"/>
</dbReference>
<dbReference type="IntAct" id="P87128">
    <property type="interactions" value="1"/>
</dbReference>
<dbReference type="STRING" id="284812.P87128"/>
<dbReference type="iPTMnet" id="P87128"/>
<dbReference type="PaxDb" id="4896-SPAC3A12.13c.1"/>
<dbReference type="EnsemblFungi" id="SPAC3A12.13c.1">
    <property type="protein sequence ID" value="SPAC3A12.13c.1:pep"/>
    <property type="gene ID" value="SPAC3A12.13c"/>
</dbReference>
<dbReference type="KEGG" id="spo:2543108"/>
<dbReference type="PomBase" id="SPAC3A12.13c"/>
<dbReference type="VEuPathDB" id="FungiDB:SPAC3A12.13c"/>
<dbReference type="eggNOG" id="KOG4813">
    <property type="taxonomic scope" value="Eukaryota"/>
</dbReference>
<dbReference type="HOGENOM" id="CLU_1016189_0_0_1"/>
<dbReference type="InParanoid" id="P87128"/>
<dbReference type="OMA" id="KNIANTW"/>
<dbReference type="Reactome" id="R-SPO-156827">
    <property type="pathway name" value="L13a-mediated translational silencing of Ceruloplasmin expression"/>
</dbReference>
<dbReference type="Reactome" id="R-SPO-72649">
    <property type="pathway name" value="Translation initiation complex formation"/>
</dbReference>
<dbReference type="Reactome" id="R-SPO-72689">
    <property type="pathway name" value="Formation of a pool of free 40S subunits"/>
</dbReference>
<dbReference type="Reactome" id="R-SPO-72695">
    <property type="pathway name" value="Formation of the ternary complex, and subsequently, the 43S complex"/>
</dbReference>
<dbReference type="Reactome" id="R-SPO-72702">
    <property type="pathway name" value="Ribosomal scanning and start codon recognition"/>
</dbReference>
<dbReference type="Reactome" id="R-SPO-72706">
    <property type="pathway name" value="GTP hydrolysis and joining of the 60S ribosomal subunit"/>
</dbReference>
<dbReference type="PRO" id="PR:P87128"/>
<dbReference type="Proteomes" id="UP000002485">
    <property type="component" value="Chromosome I"/>
</dbReference>
<dbReference type="GO" id="GO:0016282">
    <property type="term" value="C:eukaryotic 43S preinitiation complex"/>
    <property type="evidence" value="ECO:0000266"/>
    <property type="project" value="PomBase"/>
</dbReference>
<dbReference type="GO" id="GO:0033290">
    <property type="term" value="C:eukaryotic 48S preinitiation complex"/>
    <property type="evidence" value="ECO:0007669"/>
    <property type="project" value="UniProtKB-UniRule"/>
</dbReference>
<dbReference type="GO" id="GO:0005852">
    <property type="term" value="C:eukaryotic translation initiation factor 3 complex"/>
    <property type="evidence" value="ECO:0000314"/>
    <property type="project" value="PomBase"/>
</dbReference>
<dbReference type="GO" id="GO:0071541">
    <property type="term" value="C:eukaryotic translation initiation factor 3 complex, eIF3m"/>
    <property type="evidence" value="ECO:0000314"/>
    <property type="project" value="PomBase"/>
</dbReference>
<dbReference type="GO" id="GO:0019843">
    <property type="term" value="F:rRNA binding"/>
    <property type="evidence" value="ECO:0000266"/>
    <property type="project" value="PomBase"/>
</dbReference>
<dbReference type="GO" id="GO:0003743">
    <property type="term" value="F:translation initiation factor activity"/>
    <property type="evidence" value="ECO:0000266"/>
    <property type="project" value="PomBase"/>
</dbReference>
<dbReference type="GO" id="GO:0001732">
    <property type="term" value="P:formation of cytoplasmic translation initiation complex"/>
    <property type="evidence" value="ECO:0000305"/>
    <property type="project" value="PomBase"/>
</dbReference>
<dbReference type="GO" id="GO:0030490">
    <property type="term" value="P:maturation of SSU-rRNA"/>
    <property type="evidence" value="ECO:0000266"/>
    <property type="project" value="PomBase"/>
</dbReference>
<dbReference type="Gene3D" id="1.10.246.60">
    <property type="entry name" value="Eukaryotic translation initiation factor 3 like domains"/>
    <property type="match status" value="1"/>
</dbReference>
<dbReference type="HAMAP" id="MF_03009">
    <property type="entry name" value="eIF3j"/>
    <property type="match status" value="1"/>
</dbReference>
<dbReference type="InterPro" id="IPR023194">
    <property type="entry name" value="eIF3-like_dom_sf"/>
</dbReference>
<dbReference type="InterPro" id="IPR013906">
    <property type="entry name" value="eIF3j"/>
</dbReference>
<dbReference type="PANTHER" id="PTHR21681">
    <property type="entry name" value="EUKARYOTIC TRANSLATION INITIATION FACTOR 3 SUBUNIT J"/>
    <property type="match status" value="1"/>
</dbReference>
<dbReference type="PANTHER" id="PTHR21681:SF0">
    <property type="entry name" value="EUKARYOTIC TRANSLATION INITIATION FACTOR 3 SUBUNIT J"/>
    <property type="match status" value="1"/>
</dbReference>
<dbReference type="Pfam" id="PF08597">
    <property type="entry name" value="eIF3_subunit"/>
    <property type="match status" value="1"/>
</dbReference>
<protein>
    <recommendedName>
        <fullName>Probable eukaryotic translation initiation factor 3 subunit J</fullName>
        <shortName evidence="1">eIF3j</shortName>
    </recommendedName>
    <alternativeName>
        <fullName>Eukaryotic translation initiation factor 3 30 kDa subunit</fullName>
        <shortName>eIF-3 30 kDa</shortName>
    </alternativeName>
</protein>
<name>EIF3J_SCHPO</name>
<evidence type="ECO:0000255" key="1">
    <source>
        <dbReference type="HAMAP-Rule" id="MF_03009"/>
    </source>
</evidence>
<evidence type="ECO:0000256" key="2">
    <source>
        <dbReference type="SAM" id="MobiDB-lite"/>
    </source>
</evidence>
<evidence type="ECO:0000269" key="3">
    <source>
    </source>
</evidence>
<keyword id="KW-0963">Cytoplasm</keyword>
<keyword id="KW-0396">Initiation factor</keyword>
<keyword id="KW-0648">Protein biosynthesis</keyword>
<keyword id="KW-1185">Reference proteome</keyword>